<comment type="function">
    <text evidence="1">Binds to the IL-1 type I receptor following IL-1 engagement, triggering intracellular signaling cascades leading to transcriptional up-regulation and mRNA stabilization.</text>
</comment>
<comment type="subunit">
    <text evidence="1">Interacts with MYD88. IL-1 stimulation leads to the formation of a signaling complex which dissociates from the IL-1 receptor following the binding of PELI1 (By similarity).</text>
</comment>
<comment type="alternative products">
    <event type="alternative splicing"/>
    <isoform>
        <id>Q8CFA1-1</id>
        <name>1</name>
        <name>IRAK-2a</name>
        <sequence type="displayed"/>
    </isoform>
    <isoform>
        <id>Q8CFA1-2</id>
        <name>2</name>
        <name>IRAK-2b</name>
        <sequence type="described" ref="VSP_023027"/>
    </isoform>
    <isoform>
        <id>Q8CFA1-3</id>
        <name>3</name>
        <name>IRAK-2d</name>
        <sequence type="described" ref="VSP_023026 VSP_023028"/>
    </isoform>
    <isoform>
        <id>Q8CFA1-4</id>
        <name>4</name>
        <name>IRAK-2c</name>
        <sequence type="described" ref="VSP_023025"/>
    </isoform>
</comment>
<comment type="tissue specificity">
    <text>Ubiquitously expressed, with a higher expression observed in brain, spleen and liver. Isoform 1 and isoform 2 are considered agonist and isoform 3 and isoform 4 are considered antagonist.</text>
</comment>
<comment type="domain">
    <text>The protein kinase domain is predicted to be catalytically inactive.</text>
</comment>
<comment type="similarity">
    <text evidence="7">Belongs to the protein kinase superfamily. TKL Ser/Thr protein kinase family. Pelle subfamily.</text>
</comment>
<comment type="caution">
    <text evidence="7">Asn-333 is present instead of the conserved Asp which is expected to be an active site residue.</text>
</comment>
<accession>Q8CFA1</accession>
<accession>Q3U3K2</accession>
<accession>Q3U7F5</accession>
<accession>Q3UFX2</accession>
<accession>Q5U404</accession>
<accession>Q6YBR8</accession>
<accession>Q6YBR9</accession>
<accession>Q6YBS0</accession>
<accession>Q6YBS1</accession>
<accession>Q8C5M0</accession>
<accession>Q8CC82</accession>
<accession>Q8CEA0</accession>
<feature type="chain" id="PRO_0000277560" description="Interleukin-1 receptor-associated kinase-like 2">
    <location>
        <begin position="1"/>
        <end position="622"/>
    </location>
</feature>
<feature type="domain" description="Death">
    <location>
        <begin position="13"/>
        <end position="94"/>
    </location>
</feature>
<feature type="domain" description="Protein kinase" evidence="2">
    <location>
        <begin position="208"/>
        <end position="473"/>
    </location>
</feature>
<feature type="region of interest" description="Disordered" evidence="3">
    <location>
        <begin position="511"/>
        <end position="532"/>
    </location>
</feature>
<feature type="region of interest" description="Disordered" evidence="3">
    <location>
        <begin position="553"/>
        <end position="591"/>
    </location>
</feature>
<feature type="compositionally biased region" description="Polar residues" evidence="3">
    <location>
        <begin position="513"/>
        <end position="523"/>
    </location>
</feature>
<feature type="compositionally biased region" description="Polar residues" evidence="3">
    <location>
        <begin position="561"/>
        <end position="590"/>
    </location>
</feature>
<feature type="binding site" evidence="2">
    <location>
        <begin position="214"/>
        <end position="222"/>
    </location>
    <ligand>
        <name>ATP</name>
        <dbReference type="ChEBI" id="CHEBI:30616"/>
    </ligand>
</feature>
<feature type="binding site" evidence="2">
    <location>
        <position position="235"/>
    </location>
    <ligand>
        <name>ATP</name>
        <dbReference type="ChEBI" id="CHEBI:30616"/>
    </ligand>
</feature>
<feature type="binding site" evidence="2">
    <location>
        <begin position="335"/>
        <end position="338"/>
    </location>
    <ligand>
        <name>ATP</name>
        <dbReference type="ChEBI" id="CHEBI:30616"/>
    </ligand>
</feature>
<feature type="splice variant" id="VSP_023025" description="In isoform 4." evidence="4 5">
    <location>
        <begin position="1"/>
        <end position="143"/>
    </location>
</feature>
<feature type="splice variant" id="VSP_023026" description="In isoform 3." evidence="4">
    <original>ASYVITDLTQLRKIKSMERVQGVSITRELLWWWSMRQATVQQLVDLLCHLELYRAAQIVLSW</original>
    <variation>G</variation>
    <location>
        <begin position="32"/>
        <end position="93"/>
    </location>
</feature>
<feature type="splice variant" id="VSP_023027" description="In isoform 2." evidence="4 6">
    <location>
        <begin position="94"/>
        <end position="141"/>
    </location>
</feature>
<feature type="splice variant" id="VSP_023028" description="In isoform 3." evidence="4">
    <location>
        <begin position="490"/>
        <end position="499"/>
    </location>
</feature>
<feature type="sequence conflict" description="In Ref. 3; BAE28437." evidence="7" ref="3">
    <original>V</original>
    <variation>A</variation>
    <location>
        <position position="129"/>
    </location>
</feature>
<feature type="sequence conflict" description="In Ref. 3; BAC28438." evidence="7" ref="3">
    <original>PIMAGAQRQR</original>
    <variation>ALLPSFLLLF</variation>
    <location>
        <begin position="142"/>
        <end position="151"/>
    </location>
</feature>
<feature type="sequence conflict" description="In Ref. 3; BAC37114." evidence="7" ref="3">
    <original>R</original>
    <variation>V</variation>
    <location>
        <position position="151"/>
    </location>
</feature>
<feature type="sequence conflict" description="In Ref. 3; BAE28437." evidence="7" ref="3">
    <original>GLP</original>
    <variation>SLH</variation>
    <location>
        <begin position="188"/>
        <end position="190"/>
    </location>
</feature>
<feature type="sequence conflict" description="In Ref. 3; BAE28437." evidence="7" ref="3">
    <original>V</original>
    <variation>I</variation>
    <location>
        <position position="267"/>
    </location>
</feature>
<feature type="sequence conflict" description="In Ref. 3; BAE28437." evidence="7" ref="3">
    <original>F</original>
    <variation>V</variation>
    <location>
        <position position="273"/>
    </location>
</feature>
<feature type="sequence conflict" description="In Ref. 3; BAC37114." evidence="7" ref="3">
    <original>Q</original>
    <variation>R</variation>
    <location>
        <position position="343"/>
    </location>
</feature>
<feature type="sequence conflict" description="In Ref. 4; AAH85324." evidence="7" ref="4">
    <original>L</original>
    <variation>F</variation>
    <location>
        <position position="345"/>
    </location>
</feature>
<feature type="sequence conflict" description="In Ref. 3; BAE28437." evidence="7" ref="3">
    <original>C</original>
    <variation>G</variation>
    <location>
        <position position="438"/>
    </location>
</feature>
<feature type="sequence conflict" description="In Ref. 2; AAO24761/AAO24762/AAO24763/AAO24764." evidence="7" ref="2">
    <original>V</original>
    <variation>E</variation>
    <location>
        <position position="448"/>
    </location>
</feature>
<feature type="sequence conflict" description="In Ref. 3; BAE28437." evidence="7" ref="3">
    <original>K</original>
    <variation>R</variation>
    <location>
        <position position="459"/>
    </location>
</feature>
<feature type="sequence conflict" description="In Ref. 4; AAH85324." evidence="7" ref="4">
    <original>W</original>
    <variation>G</variation>
    <location>
        <position position="509"/>
    </location>
</feature>
<feature type="sequence conflict" description="In Ref. 3; BAC26088." evidence="7" ref="3">
    <original>S</original>
    <variation>G</variation>
    <location>
        <position position="535"/>
    </location>
</feature>
<feature type="sequence conflict" description="In Ref. 3; BAE28437." evidence="7" ref="3">
    <original>F</original>
    <variation>S</variation>
    <location>
        <position position="554"/>
    </location>
</feature>
<feature type="sequence conflict" description="In Ref. 3; BAE28437." evidence="7" ref="3">
    <original>N</original>
    <variation>D</variation>
    <location>
        <position position="585"/>
    </location>
</feature>
<feature type="sequence conflict" description="In Ref. 3; BAE28437." evidence="7" ref="3">
    <original>K</original>
    <variation>E</variation>
    <location>
        <position position="599"/>
    </location>
</feature>
<protein>
    <recommendedName>
        <fullName>Interleukin-1 receptor-associated kinase-like 2</fullName>
        <shortName>IRAK-2</shortName>
        <shortName>mu-IRAK-2</shortName>
    </recommendedName>
</protein>
<name>IRAK2_MOUSE</name>
<organism>
    <name type="scientific">Mus musculus</name>
    <name type="common">Mouse</name>
    <dbReference type="NCBI Taxonomy" id="10090"/>
    <lineage>
        <taxon>Eukaryota</taxon>
        <taxon>Metazoa</taxon>
        <taxon>Chordata</taxon>
        <taxon>Craniata</taxon>
        <taxon>Vertebrata</taxon>
        <taxon>Euteleostomi</taxon>
        <taxon>Mammalia</taxon>
        <taxon>Eutheria</taxon>
        <taxon>Euarchontoglires</taxon>
        <taxon>Glires</taxon>
        <taxon>Rodentia</taxon>
        <taxon>Myomorpha</taxon>
        <taxon>Muroidea</taxon>
        <taxon>Muridae</taxon>
        <taxon>Murinae</taxon>
        <taxon>Mus</taxon>
        <taxon>Mus</taxon>
    </lineage>
</organism>
<sequence length="622" mass="69047">MACYIYQLPSWVLDDLCRNIDTLSEWDWMQFASYVITDLTQLRKIKSMERVQGVSITRELLWWWSMRQATVQQLVDLLCHLELYRAAQIVLSWKPVPESTSPLPAFPEAVKPGAVATSRRNLKDEQEKVRPVKPRSLLDTGPIMAGAQRQRPCEMDAPCSLKTDAPDSPQSKYCSTSTSAPKQERLLGLPGDRLFWSEADVVQATEDFDQSHRISEGTFADIYQGQRNGVAFAFKKLREVAGSSPGSMDRFLQAEMQLCLRCCHANVLPLLGFCTGRQFHSLIYPYMANGSLHDRLWAQGNSDMLPWPQRASICSGLLLAVEHLHSLDIIHSNVKSANVLLDQHLNPKLAHPVAHPHPDNKKTKYTVMRTHLFQASAAYLPEHFIRVGQLTKQVDIFSCGIVLAEVLTGIPAMDKDRSPVYLKDLLLSEIPNSTSSVCSRKTSMGKAVVKEICQRHVEKRAGLLPEACEEAWATAVSVCLRRRNASVEEARVSLAGVEEQLRGQLSLPWSRVSEATGSSSNTPEETDDVDNSSLSVPSLVMMASCPGAASSPLFTGHGAAQPSTSGRQEADSSSEACTGPQTPQNATETSWKIEINEAKRRLMENIVLYKEERLDSSELFGP</sequence>
<keyword id="KW-0025">Alternative splicing</keyword>
<keyword id="KW-0067">ATP-binding</keyword>
<keyword id="KW-0547">Nucleotide-binding</keyword>
<keyword id="KW-1185">Reference proteome</keyword>
<proteinExistence type="evidence at transcript level"/>
<dbReference type="EMBL" id="AJ440756">
    <property type="protein sequence ID" value="CAD29447.2"/>
    <property type="molecule type" value="mRNA"/>
</dbReference>
<dbReference type="EMBL" id="AY162378">
    <property type="protein sequence ID" value="AAO24761.1"/>
    <property type="molecule type" value="mRNA"/>
</dbReference>
<dbReference type="EMBL" id="AY162379">
    <property type="protein sequence ID" value="AAO24762.1"/>
    <property type="molecule type" value="mRNA"/>
</dbReference>
<dbReference type="EMBL" id="AY162380">
    <property type="protein sequence ID" value="AAO24763.1"/>
    <property type="molecule type" value="mRNA"/>
</dbReference>
<dbReference type="EMBL" id="AY162381">
    <property type="protein sequence ID" value="AAO24764.1"/>
    <property type="molecule type" value="mRNA"/>
</dbReference>
<dbReference type="EMBL" id="AK028733">
    <property type="protein sequence ID" value="BAC26088.1"/>
    <property type="molecule type" value="mRNA"/>
</dbReference>
<dbReference type="EMBL" id="AK033707">
    <property type="protein sequence ID" value="BAC28438.1"/>
    <property type="molecule type" value="mRNA"/>
</dbReference>
<dbReference type="EMBL" id="AK078062">
    <property type="protein sequence ID" value="BAC37114.1"/>
    <property type="molecule type" value="mRNA"/>
</dbReference>
<dbReference type="EMBL" id="AK148248">
    <property type="protein sequence ID" value="BAE28437.1"/>
    <property type="molecule type" value="mRNA"/>
</dbReference>
<dbReference type="EMBL" id="AK150056">
    <property type="protein sequence ID" value="BAE29271.1"/>
    <property type="molecule type" value="mRNA"/>
</dbReference>
<dbReference type="EMBL" id="AK151428">
    <property type="protein sequence ID" value="BAE30392.1"/>
    <property type="molecule type" value="mRNA"/>
</dbReference>
<dbReference type="EMBL" id="AK152682">
    <property type="protein sequence ID" value="BAE31414.1"/>
    <property type="molecule type" value="mRNA"/>
</dbReference>
<dbReference type="EMBL" id="AK154715">
    <property type="protein sequence ID" value="BAE32783.1"/>
    <property type="molecule type" value="mRNA"/>
</dbReference>
<dbReference type="EMBL" id="BC085324">
    <property type="protein sequence ID" value="AAH85324.1"/>
    <property type="molecule type" value="mRNA"/>
</dbReference>
<dbReference type="CCDS" id="CCDS20430.1">
    <molecule id="Q8CFA1-1"/>
</dbReference>
<dbReference type="CCDS" id="CCDS51873.1">
    <molecule id="Q8CFA1-2"/>
</dbReference>
<dbReference type="RefSeq" id="NP_001107025.1">
    <molecule id="Q8CFA1-2"/>
    <property type="nucleotide sequence ID" value="NM_001113553.1"/>
</dbReference>
<dbReference type="RefSeq" id="NP_751893.3">
    <molecule id="Q8CFA1-1"/>
    <property type="nucleotide sequence ID" value="NM_172161.4"/>
</dbReference>
<dbReference type="RefSeq" id="XP_006505388.1">
    <molecule id="Q8CFA1-4"/>
    <property type="nucleotide sequence ID" value="XM_006505325.5"/>
</dbReference>
<dbReference type="SMR" id="Q8CFA1"/>
<dbReference type="BioGRID" id="224495">
    <property type="interactions" value="18"/>
</dbReference>
<dbReference type="DIP" id="DIP-49685N"/>
<dbReference type="FunCoup" id="Q8CFA1">
    <property type="interactions" value="794"/>
</dbReference>
<dbReference type="IntAct" id="Q8CFA1">
    <property type="interactions" value="4"/>
</dbReference>
<dbReference type="MINT" id="Q8CFA1"/>
<dbReference type="STRING" id="10090.ENSMUSP00000055073"/>
<dbReference type="GlyGen" id="Q8CFA1">
    <property type="glycosylation" value="6 sites"/>
</dbReference>
<dbReference type="iPTMnet" id="Q8CFA1"/>
<dbReference type="PhosphoSitePlus" id="Q8CFA1"/>
<dbReference type="PaxDb" id="10090-ENSMUSP00000055073"/>
<dbReference type="ProteomicsDB" id="269328">
    <molecule id="Q8CFA1-1"/>
</dbReference>
<dbReference type="ProteomicsDB" id="269329">
    <molecule id="Q8CFA1-2"/>
</dbReference>
<dbReference type="ProteomicsDB" id="269330">
    <molecule id="Q8CFA1-3"/>
</dbReference>
<dbReference type="ProteomicsDB" id="269331">
    <molecule id="Q8CFA1-4"/>
</dbReference>
<dbReference type="Antibodypedia" id="4605">
    <property type="antibodies" value="716 antibodies from 42 providers"/>
</dbReference>
<dbReference type="DNASU" id="108960"/>
<dbReference type="Ensembl" id="ENSMUST00000059286.14">
    <molecule id="Q8CFA1-1"/>
    <property type="protein sequence ID" value="ENSMUSP00000055073.8"/>
    <property type="gene ID" value="ENSMUSG00000060477.15"/>
</dbReference>
<dbReference type="Ensembl" id="ENSMUST00000089022.9">
    <molecule id="Q8CFA1-2"/>
    <property type="protein sequence ID" value="ENSMUSP00000086416.5"/>
    <property type="gene ID" value="ENSMUSG00000060477.15"/>
</dbReference>
<dbReference type="Ensembl" id="ENSMUST00000089023.11">
    <molecule id="Q8CFA1-3"/>
    <property type="protein sequence ID" value="ENSMUSP00000086417.5"/>
    <property type="gene ID" value="ENSMUSG00000060477.15"/>
</dbReference>
<dbReference type="GeneID" id="108960"/>
<dbReference type="KEGG" id="mmu:108960"/>
<dbReference type="UCSC" id="uc009dhc.3">
    <molecule id="Q8CFA1-1"/>
    <property type="organism name" value="mouse"/>
</dbReference>
<dbReference type="UCSC" id="uc009dhe.3">
    <molecule id="Q8CFA1-2"/>
    <property type="organism name" value="mouse"/>
</dbReference>
<dbReference type="UCSC" id="uc012eqf.2">
    <molecule id="Q8CFA1-3"/>
    <property type="organism name" value="mouse"/>
</dbReference>
<dbReference type="AGR" id="MGI:2429603"/>
<dbReference type="CTD" id="3656"/>
<dbReference type="MGI" id="MGI:2429603">
    <property type="gene designation" value="Irak2"/>
</dbReference>
<dbReference type="VEuPathDB" id="HostDB:ENSMUSG00000060477"/>
<dbReference type="eggNOG" id="KOG1187">
    <property type="taxonomic scope" value="Eukaryota"/>
</dbReference>
<dbReference type="GeneTree" id="ENSGT00940000159835"/>
<dbReference type="HOGENOM" id="CLU_000288_173_0_1"/>
<dbReference type="InParanoid" id="Q8CFA1"/>
<dbReference type="OMA" id="ALSEWDW"/>
<dbReference type="OrthoDB" id="4062651at2759"/>
<dbReference type="PhylomeDB" id="Q8CFA1"/>
<dbReference type="TreeFam" id="TF328924"/>
<dbReference type="Reactome" id="R-MMU-445989">
    <property type="pathway name" value="TAK1-dependent IKK and NF-kappa-B activation"/>
</dbReference>
<dbReference type="Reactome" id="R-MMU-450302">
    <property type="pathway name" value="activated TAK1 mediates p38 MAPK activation"/>
</dbReference>
<dbReference type="Reactome" id="R-MMU-450321">
    <property type="pathway name" value="JNK (c-Jun kinases) phosphorylation and activation mediated by activated human TAK1"/>
</dbReference>
<dbReference type="Reactome" id="R-MMU-9020702">
    <property type="pathway name" value="Interleukin-1 signaling"/>
</dbReference>
<dbReference type="Reactome" id="R-MMU-937042">
    <property type="pathway name" value="IRAK2 mediated activation of TAK1 complex"/>
</dbReference>
<dbReference type="Reactome" id="R-MMU-937072">
    <property type="pathway name" value="TRAF6-mediated induction of TAK1 complex within TLR4 complex"/>
</dbReference>
<dbReference type="Reactome" id="R-MMU-975163">
    <property type="pathway name" value="IRAK2 mediated activation of TAK1 complex upon TLR7/8 or 9 stimulation"/>
</dbReference>
<dbReference type="BioGRID-ORCS" id="108960">
    <property type="hits" value="1 hit in 81 CRISPR screens"/>
</dbReference>
<dbReference type="ChiTaRS" id="Irak2">
    <property type="organism name" value="mouse"/>
</dbReference>
<dbReference type="PRO" id="PR:Q8CFA1"/>
<dbReference type="Proteomes" id="UP000000589">
    <property type="component" value="Chromosome 6"/>
</dbReference>
<dbReference type="RNAct" id="Q8CFA1">
    <property type="molecule type" value="protein"/>
</dbReference>
<dbReference type="Bgee" id="ENSMUSG00000060477">
    <property type="expression patterns" value="Expressed in granulocyte and 62 other cell types or tissues"/>
</dbReference>
<dbReference type="ExpressionAtlas" id="Q8CFA1">
    <property type="expression patterns" value="baseline and differential"/>
</dbReference>
<dbReference type="GO" id="GO:0005524">
    <property type="term" value="F:ATP binding"/>
    <property type="evidence" value="ECO:0007669"/>
    <property type="project" value="UniProtKB-KW"/>
</dbReference>
<dbReference type="GO" id="GO:0046982">
    <property type="term" value="F:protein heterodimerization activity"/>
    <property type="evidence" value="ECO:0007669"/>
    <property type="project" value="Ensembl"/>
</dbReference>
<dbReference type="GO" id="GO:0042803">
    <property type="term" value="F:protein homodimerization activity"/>
    <property type="evidence" value="ECO:0007669"/>
    <property type="project" value="Ensembl"/>
</dbReference>
<dbReference type="GO" id="GO:0004672">
    <property type="term" value="F:protein kinase activity"/>
    <property type="evidence" value="ECO:0000266"/>
    <property type="project" value="MGI"/>
</dbReference>
<dbReference type="GO" id="GO:0035591">
    <property type="term" value="F:signaling adaptor activity"/>
    <property type="evidence" value="ECO:0007669"/>
    <property type="project" value="Ensembl"/>
</dbReference>
<dbReference type="GO" id="GO:0007249">
    <property type="term" value="P:canonical NF-kappaB signal transduction"/>
    <property type="evidence" value="ECO:0007669"/>
    <property type="project" value="Ensembl"/>
</dbReference>
<dbReference type="GO" id="GO:0070498">
    <property type="term" value="P:interleukin-1-mediated signaling pathway"/>
    <property type="evidence" value="ECO:0007669"/>
    <property type="project" value="Ensembl"/>
</dbReference>
<dbReference type="GO" id="GO:0031663">
    <property type="term" value="P:lipopolysaccharide-mediated signaling pathway"/>
    <property type="evidence" value="ECO:0000314"/>
    <property type="project" value="MGI"/>
</dbReference>
<dbReference type="GO" id="GO:0043124">
    <property type="term" value="P:negative regulation of canonical NF-kappaB signal transduction"/>
    <property type="evidence" value="ECO:0007669"/>
    <property type="project" value="Ensembl"/>
</dbReference>
<dbReference type="GO" id="GO:0001959">
    <property type="term" value="P:regulation of cytokine-mediated signaling pathway"/>
    <property type="evidence" value="ECO:0007669"/>
    <property type="project" value="Ensembl"/>
</dbReference>
<dbReference type="GO" id="GO:0034142">
    <property type="term" value="P:toll-like receptor 4 signaling pathway"/>
    <property type="evidence" value="ECO:0007669"/>
    <property type="project" value="Ensembl"/>
</dbReference>
<dbReference type="CDD" id="cd08795">
    <property type="entry name" value="Death_IRAK2"/>
    <property type="match status" value="1"/>
</dbReference>
<dbReference type="FunFam" id="1.10.510.10:FF:000586">
    <property type="entry name" value="Interleukin-1 receptor-associated kinase-like 2"/>
    <property type="match status" value="1"/>
</dbReference>
<dbReference type="FunFam" id="1.10.533.10:FF:000030">
    <property type="entry name" value="Interleukin-1 receptor-associated kinase-like 2"/>
    <property type="match status" value="1"/>
</dbReference>
<dbReference type="FunFam" id="3.30.200.20:FF:000412">
    <property type="entry name" value="interleukin-1 receptor-associated kinase-like 2"/>
    <property type="match status" value="1"/>
</dbReference>
<dbReference type="Gene3D" id="1.10.533.10">
    <property type="entry name" value="Death Domain, Fas"/>
    <property type="match status" value="1"/>
</dbReference>
<dbReference type="Gene3D" id="3.30.200.20">
    <property type="entry name" value="Phosphorylase Kinase, domain 1"/>
    <property type="match status" value="1"/>
</dbReference>
<dbReference type="Gene3D" id="1.10.510.10">
    <property type="entry name" value="Transferase(Phosphotransferase) domain 1"/>
    <property type="match status" value="1"/>
</dbReference>
<dbReference type="InterPro" id="IPR011029">
    <property type="entry name" value="DEATH-like_dom_sf"/>
</dbReference>
<dbReference type="InterPro" id="IPR000488">
    <property type="entry name" value="Death_dom"/>
</dbReference>
<dbReference type="InterPro" id="IPR042151">
    <property type="entry name" value="Death_IRAK2"/>
</dbReference>
<dbReference type="InterPro" id="IPR011009">
    <property type="entry name" value="Kinase-like_dom_sf"/>
</dbReference>
<dbReference type="InterPro" id="IPR000719">
    <property type="entry name" value="Prot_kinase_dom"/>
</dbReference>
<dbReference type="PANTHER" id="PTHR24419">
    <property type="entry name" value="INTERLEUKIN-1 RECEPTOR-ASSOCIATED KINASE"/>
    <property type="match status" value="1"/>
</dbReference>
<dbReference type="PANTHER" id="PTHR24419:SF2">
    <property type="entry name" value="INTERLEUKIN-1 RECEPTOR-ASSOCIATED KINASE-LIKE 2"/>
    <property type="match status" value="1"/>
</dbReference>
<dbReference type="Pfam" id="PF00531">
    <property type="entry name" value="Death"/>
    <property type="match status" value="1"/>
</dbReference>
<dbReference type="Pfam" id="PF00069">
    <property type="entry name" value="Pkinase"/>
    <property type="match status" value="1"/>
</dbReference>
<dbReference type="SUPFAM" id="SSF47986">
    <property type="entry name" value="DEATH domain"/>
    <property type="match status" value="1"/>
</dbReference>
<dbReference type="SUPFAM" id="SSF56112">
    <property type="entry name" value="Protein kinase-like (PK-like)"/>
    <property type="match status" value="1"/>
</dbReference>
<dbReference type="PROSITE" id="PS50011">
    <property type="entry name" value="PROTEIN_KINASE_DOM"/>
    <property type="match status" value="1"/>
</dbReference>
<reference key="1">
    <citation type="journal article" date="2002" name="Biochem. Biophys. Res. Commun.">
        <title>Identification and characterization of murine IRAK-2.</title>
        <authorList>
            <person name="Rosati O."/>
            <person name="Martin M.U."/>
        </authorList>
    </citation>
    <scope>NUCLEOTIDE SEQUENCE [MRNA] (ISOFORM 1)</scope>
    <source>
        <strain>BALB/cJ</strain>
    </source>
</reference>
<reference key="2">
    <citation type="journal article" date="2004" name="J. Biol. Chem.">
        <title>The murine IRAK2 gene encodes four alternatively spliced isoforms, two of which are inhibitory.</title>
        <authorList>
            <person name="Hardy M.P."/>
            <person name="O'Neill L.A."/>
        </authorList>
    </citation>
    <scope>NUCLEOTIDE SEQUENCE [MRNA] (ISOFORMS 1; 2; 3 AND 4)</scope>
    <source>
        <strain>C57BL/6J</strain>
    </source>
</reference>
<reference key="3">
    <citation type="journal article" date="2005" name="Science">
        <title>The transcriptional landscape of the mammalian genome.</title>
        <authorList>
            <person name="Carninci P."/>
            <person name="Kasukawa T."/>
            <person name="Katayama S."/>
            <person name="Gough J."/>
            <person name="Frith M.C."/>
            <person name="Maeda N."/>
            <person name="Oyama R."/>
            <person name="Ravasi T."/>
            <person name="Lenhard B."/>
            <person name="Wells C."/>
            <person name="Kodzius R."/>
            <person name="Shimokawa K."/>
            <person name="Bajic V.B."/>
            <person name="Brenner S.E."/>
            <person name="Batalov S."/>
            <person name="Forrest A.R."/>
            <person name="Zavolan M."/>
            <person name="Davis M.J."/>
            <person name="Wilming L.G."/>
            <person name="Aidinis V."/>
            <person name="Allen J.E."/>
            <person name="Ambesi-Impiombato A."/>
            <person name="Apweiler R."/>
            <person name="Aturaliya R.N."/>
            <person name="Bailey T.L."/>
            <person name="Bansal M."/>
            <person name="Baxter L."/>
            <person name="Beisel K.W."/>
            <person name="Bersano T."/>
            <person name="Bono H."/>
            <person name="Chalk A.M."/>
            <person name="Chiu K.P."/>
            <person name="Choudhary V."/>
            <person name="Christoffels A."/>
            <person name="Clutterbuck D.R."/>
            <person name="Crowe M.L."/>
            <person name="Dalla E."/>
            <person name="Dalrymple B.P."/>
            <person name="de Bono B."/>
            <person name="Della Gatta G."/>
            <person name="di Bernardo D."/>
            <person name="Down T."/>
            <person name="Engstrom P."/>
            <person name="Fagiolini M."/>
            <person name="Faulkner G."/>
            <person name="Fletcher C.F."/>
            <person name="Fukushima T."/>
            <person name="Furuno M."/>
            <person name="Futaki S."/>
            <person name="Gariboldi M."/>
            <person name="Georgii-Hemming P."/>
            <person name="Gingeras T.R."/>
            <person name="Gojobori T."/>
            <person name="Green R.E."/>
            <person name="Gustincich S."/>
            <person name="Harbers M."/>
            <person name="Hayashi Y."/>
            <person name="Hensch T.K."/>
            <person name="Hirokawa N."/>
            <person name="Hill D."/>
            <person name="Huminiecki L."/>
            <person name="Iacono M."/>
            <person name="Ikeo K."/>
            <person name="Iwama A."/>
            <person name="Ishikawa T."/>
            <person name="Jakt M."/>
            <person name="Kanapin A."/>
            <person name="Katoh M."/>
            <person name="Kawasawa Y."/>
            <person name="Kelso J."/>
            <person name="Kitamura H."/>
            <person name="Kitano H."/>
            <person name="Kollias G."/>
            <person name="Krishnan S.P."/>
            <person name="Kruger A."/>
            <person name="Kummerfeld S.K."/>
            <person name="Kurochkin I.V."/>
            <person name="Lareau L.F."/>
            <person name="Lazarevic D."/>
            <person name="Lipovich L."/>
            <person name="Liu J."/>
            <person name="Liuni S."/>
            <person name="McWilliam S."/>
            <person name="Madan Babu M."/>
            <person name="Madera M."/>
            <person name="Marchionni L."/>
            <person name="Matsuda H."/>
            <person name="Matsuzawa S."/>
            <person name="Miki H."/>
            <person name="Mignone F."/>
            <person name="Miyake S."/>
            <person name="Morris K."/>
            <person name="Mottagui-Tabar S."/>
            <person name="Mulder N."/>
            <person name="Nakano N."/>
            <person name="Nakauchi H."/>
            <person name="Ng P."/>
            <person name="Nilsson R."/>
            <person name="Nishiguchi S."/>
            <person name="Nishikawa S."/>
            <person name="Nori F."/>
            <person name="Ohara O."/>
            <person name="Okazaki Y."/>
            <person name="Orlando V."/>
            <person name="Pang K.C."/>
            <person name="Pavan W.J."/>
            <person name="Pavesi G."/>
            <person name="Pesole G."/>
            <person name="Petrovsky N."/>
            <person name="Piazza S."/>
            <person name="Reed J."/>
            <person name="Reid J.F."/>
            <person name="Ring B.Z."/>
            <person name="Ringwald M."/>
            <person name="Rost B."/>
            <person name="Ruan Y."/>
            <person name="Salzberg S.L."/>
            <person name="Sandelin A."/>
            <person name="Schneider C."/>
            <person name="Schoenbach C."/>
            <person name="Sekiguchi K."/>
            <person name="Semple C.A."/>
            <person name="Seno S."/>
            <person name="Sessa L."/>
            <person name="Sheng Y."/>
            <person name="Shibata Y."/>
            <person name="Shimada H."/>
            <person name="Shimada K."/>
            <person name="Silva D."/>
            <person name="Sinclair B."/>
            <person name="Sperling S."/>
            <person name="Stupka E."/>
            <person name="Sugiura K."/>
            <person name="Sultana R."/>
            <person name="Takenaka Y."/>
            <person name="Taki K."/>
            <person name="Tammoja K."/>
            <person name="Tan S.L."/>
            <person name="Tang S."/>
            <person name="Taylor M.S."/>
            <person name="Tegner J."/>
            <person name="Teichmann S.A."/>
            <person name="Ueda H.R."/>
            <person name="van Nimwegen E."/>
            <person name="Verardo R."/>
            <person name="Wei C.L."/>
            <person name="Yagi K."/>
            <person name="Yamanishi H."/>
            <person name="Zabarovsky E."/>
            <person name="Zhu S."/>
            <person name="Zimmer A."/>
            <person name="Hide W."/>
            <person name="Bult C."/>
            <person name="Grimmond S.M."/>
            <person name="Teasdale R.D."/>
            <person name="Liu E.T."/>
            <person name="Brusic V."/>
            <person name="Quackenbush J."/>
            <person name="Wahlestedt C."/>
            <person name="Mattick J.S."/>
            <person name="Hume D.A."/>
            <person name="Kai C."/>
            <person name="Sasaki D."/>
            <person name="Tomaru Y."/>
            <person name="Fukuda S."/>
            <person name="Kanamori-Katayama M."/>
            <person name="Suzuki M."/>
            <person name="Aoki J."/>
            <person name="Arakawa T."/>
            <person name="Iida J."/>
            <person name="Imamura K."/>
            <person name="Itoh M."/>
            <person name="Kato T."/>
            <person name="Kawaji H."/>
            <person name="Kawagashira N."/>
            <person name="Kawashima T."/>
            <person name="Kojima M."/>
            <person name="Kondo S."/>
            <person name="Konno H."/>
            <person name="Nakano K."/>
            <person name="Ninomiya N."/>
            <person name="Nishio T."/>
            <person name="Okada M."/>
            <person name="Plessy C."/>
            <person name="Shibata K."/>
            <person name="Shiraki T."/>
            <person name="Suzuki S."/>
            <person name="Tagami M."/>
            <person name="Waki K."/>
            <person name="Watahiki A."/>
            <person name="Okamura-Oho Y."/>
            <person name="Suzuki H."/>
            <person name="Kawai J."/>
            <person name="Hayashizaki Y."/>
        </authorList>
    </citation>
    <scope>NUCLEOTIDE SEQUENCE [LARGE SCALE MRNA] (ISOFORMS 1 AND 2)</scope>
    <source>
        <strain>C57BL/6J</strain>
        <strain>NOD</strain>
        <tissue>Bone marrow</tissue>
        <tissue>Cecum</tissue>
        <tissue>Medulla oblongata</tissue>
        <tissue>Skin</tissue>
    </source>
</reference>
<reference key="4">
    <citation type="journal article" date="2004" name="Genome Res.">
        <title>The status, quality, and expansion of the NIH full-length cDNA project: the Mammalian Gene Collection (MGC).</title>
        <authorList>
            <consortium name="The MGC Project Team"/>
        </authorList>
    </citation>
    <scope>NUCLEOTIDE SEQUENCE [LARGE SCALE MRNA] (ISOFORM 4)</scope>
    <source>
        <tissue>Trophoblast stem cell</tissue>
    </source>
</reference>
<evidence type="ECO:0000250" key="1"/>
<evidence type="ECO:0000255" key="2">
    <source>
        <dbReference type="PROSITE-ProRule" id="PRU00159"/>
    </source>
</evidence>
<evidence type="ECO:0000256" key="3">
    <source>
        <dbReference type="SAM" id="MobiDB-lite"/>
    </source>
</evidence>
<evidence type="ECO:0000303" key="4">
    <source>
    </source>
</evidence>
<evidence type="ECO:0000303" key="5">
    <source>
    </source>
</evidence>
<evidence type="ECO:0000303" key="6">
    <source>
    </source>
</evidence>
<evidence type="ECO:0000305" key="7"/>
<gene>
    <name type="primary">Irak2</name>
</gene>